<proteinExistence type="evidence at protein level"/>
<organism>
    <name type="scientific">Zea mays</name>
    <name type="common">Maize</name>
    <dbReference type="NCBI Taxonomy" id="4577"/>
    <lineage>
        <taxon>Eukaryota</taxon>
        <taxon>Viridiplantae</taxon>
        <taxon>Streptophyta</taxon>
        <taxon>Embryophyta</taxon>
        <taxon>Tracheophyta</taxon>
        <taxon>Spermatophyta</taxon>
        <taxon>Magnoliopsida</taxon>
        <taxon>Liliopsida</taxon>
        <taxon>Poales</taxon>
        <taxon>Poaceae</taxon>
        <taxon>PACMAD clade</taxon>
        <taxon>Panicoideae</taxon>
        <taxon>Andropogonodae</taxon>
        <taxon>Andropogoneae</taxon>
        <taxon>Tripsacinae</taxon>
        <taxon>Zea</taxon>
    </lineage>
</organism>
<evidence type="ECO:0000250" key="1">
    <source>
        <dbReference type="UniProtKB" id="P42738"/>
    </source>
</evidence>
<evidence type="ECO:0000255" key="2">
    <source>
        <dbReference type="PROSITE-ProRule" id="PRU00516"/>
    </source>
</evidence>
<evidence type="ECO:0000269" key="3">
    <source>
    </source>
</evidence>
<evidence type="ECO:0000303" key="4">
    <source>
    </source>
</evidence>
<evidence type="ECO:0000305" key="5"/>
<evidence type="ECO:0000312" key="6">
    <source>
        <dbReference type="EMBL" id="AQK69073.1"/>
    </source>
</evidence>
<evidence type="ECO:0007829" key="7">
    <source>
        <dbReference type="PDB" id="6H3P"/>
    </source>
</evidence>
<gene>
    <name evidence="4" type="primary">CM2</name>
    <name evidence="6" type="ORF">ZEAMMB73_Zm00001d015509</name>
</gene>
<reference key="1">
    <citation type="journal article" date="2009" name="Science">
        <title>The B73 maize genome: complexity, diversity, and dynamics.</title>
        <authorList>
            <person name="Schnable P.S."/>
            <person name="Ware D."/>
            <person name="Fulton R.S."/>
            <person name="Stein J.C."/>
            <person name="Wei F."/>
            <person name="Pasternak S."/>
            <person name="Liang C."/>
            <person name="Zhang J."/>
            <person name="Fulton L."/>
            <person name="Graves T.A."/>
            <person name="Minx P."/>
            <person name="Reily A.D."/>
            <person name="Courtney L."/>
            <person name="Kruchowski S.S."/>
            <person name="Tomlinson C."/>
            <person name="Strong C."/>
            <person name="Delehaunty K."/>
            <person name="Fronick C."/>
            <person name="Courtney B."/>
            <person name="Rock S.M."/>
            <person name="Belter E."/>
            <person name="Du F."/>
            <person name="Kim K."/>
            <person name="Abbott R.M."/>
            <person name="Cotton M."/>
            <person name="Levy A."/>
            <person name="Marchetto P."/>
            <person name="Ochoa K."/>
            <person name="Jackson S.M."/>
            <person name="Gillam B."/>
            <person name="Chen W."/>
            <person name="Yan L."/>
            <person name="Higginbotham J."/>
            <person name="Cardenas M."/>
            <person name="Waligorski J."/>
            <person name="Applebaum E."/>
            <person name="Phelps L."/>
            <person name="Falcone J."/>
            <person name="Kanchi K."/>
            <person name="Thane T."/>
            <person name="Scimone A."/>
            <person name="Thane N."/>
            <person name="Henke J."/>
            <person name="Wang T."/>
            <person name="Ruppert J."/>
            <person name="Shah N."/>
            <person name="Rotter K."/>
            <person name="Hodges J."/>
            <person name="Ingenthron E."/>
            <person name="Cordes M."/>
            <person name="Kohlberg S."/>
            <person name="Sgro J."/>
            <person name="Delgado B."/>
            <person name="Mead K."/>
            <person name="Chinwalla A."/>
            <person name="Leonard S."/>
            <person name="Crouse K."/>
            <person name="Collura K."/>
            <person name="Kudrna D."/>
            <person name="Currie J."/>
            <person name="He R."/>
            <person name="Angelova A."/>
            <person name="Rajasekar S."/>
            <person name="Mueller T."/>
            <person name="Lomeli R."/>
            <person name="Scara G."/>
            <person name="Ko A."/>
            <person name="Delaney K."/>
            <person name="Wissotski M."/>
            <person name="Lopez G."/>
            <person name="Campos D."/>
            <person name="Braidotti M."/>
            <person name="Ashley E."/>
            <person name="Golser W."/>
            <person name="Kim H."/>
            <person name="Lee S."/>
            <person name="Lin J."/>
            <person name="Dujmic Z."/>
            <person name="Kim W."/>
            <person name="Talag J."/>
            <person name="Zuccolo A."/>
            <person name="Fan C."/>
            <person name="Sebastian A."/>
            <person name="Kramer M."/>
            <person name="Spiegel L."/>
            <person name="Nascimento L."/>
            <person name="Zutavern T."/>
            <person name="Miller B."/>
            <person name="Ambroise C."/>
            <person name="Muller S."/>
            <person name="Spooner W."/>
            <person name="Narechania A."/>
            <person name="Ren L."/>
            <person name="Wei S."/>
            <person name="Kumari S."/>
            <person name="Faga B."/>
            <person name="Levy M.J."/>
            <person name="McMahan L."/>
            <person name="Van Buren P."/>
            <person name="Vaughn M.W."/>
            <person name="Ying K."/>
            <person name="Yeh C.-T."/>
            <person name="Emrich S.J."/>
            <person name="Jia Y."/>
            <person name="Kalyanaraman A."/>
            <person name="Hsia A.-P."/>
            <person name="Barbazuk W.B."/>
            <person name="Baucom R.S."/>
            <person name="Brutnell T.P."/>
            <person name="Carpita N.C."/>
            <person name="Chaparro C."/>
            <person name="Chia J.-M."/>
            <person name="Deragon J.-M."/>
            <person name="Estill J.C."/>
            <person name="Fu Y."/>
            <person name="Jeddeloh J.A."/>
            <person name="Han Y."/>
            <person name="Lee H."/>
            <person name="Li P."/>
            <person name="Lisch D.R."/>
            <person name="Liu S."/>
            <person name="Liu Z."/>
            <person name="Nagel D.H."/>
            <person name="McCann M.C."/>
            <person name="SanMiguel P."/>
            <person name="Myers A.M."/>
            <person name="Nettleton D."/>
            <person name="Nguyen J."/>
            <person name="Penning B.W."/>
            <person name="Ponnala L."/>
            <person name="Schneider K.L."/>
            <person name="Schwartz D.C."/>
            <person name="Sharma A."/>
            <person name="Soderlund C."/>
            <person name="Springer N.M."/>
            <person name="Sun Q."/>
            <person name="Wang H."/>
            <person name="Waterman M."/>
            <person name="Westerman R."/>
            <person name="Wolfgruber T.K."/>
            <person name="Yang L."/>
            <person name="Yu Y."/>
            <person name="Zhang L."/>
            <person name="Zhou S."/>
            <person name="Zhu Q."/>
            <person name="Bennetzen J.L."/>
            <person name="Dawe R.K."/>
            <person name="Jiang J."/>
            <person name="Jiang N."/>
            <person name="Presting G.G."/>
            <person name="Wessler S.R."/>
            <person name="Aluru S."/>
            <person name="Martienssen R.A."/>
            <person name="Clifton S.W."/>
            <person name="McCombie W.R."/>
            <person name="Wing R.A."/>
            <person name="Wilson R.K."/>
        </authorList>
    </citation>
    <scope>NUCLEOTIDE SEQUENCE [LARGE SCALE GENOMIC DNA]</scope>
    <source>
        <strain>cv. B73</strain>
    </source>
</reference>
<reference key="2">
    <citation type="journal article" date="2009" name="Plant Mol. Biol.">
        <title>Insights into corn genes derived from large-scale cDNA sequencing.</title>
        <authorList>
            <person name="Alexandrov N.N."/>
            <person name="Brover V.V."/>
            <person name="Freidin S."/>
            <person name="Troukhan M.E."/>
            <person name="Tatarinova T.V."/>
            <person name="Zhang H."/>
            <person name="Swaller T.J."/>
            <person name="Lu Y.-P."/>
            <person name="Bouck J."/>
            <person name="Flavell R.B."/>
            <person name="Feldmann K.A."/>
        </authorList>
    </citation>
    <scope>NUCLEOTIDE SEQUENCE [LARGE SCALE MRNA]</scope>
</reference>
<reference key="3">
    <citation type="journal article" date="2009" name="PLoS Genet.">
        <title>Sequencing, mapping, and analysis of 27,455 maize full-length cDNAs.</title>
        <authorList>
            <person name="Soderlund C."/>
            <person name="Descour A."/>
            <person name="Kudrna D."/>
            <person name="Bomhoff M."/>
            <person name="Boyd L."/>
            <person name="Currie J."/>
            <person name="Angelova A."/>
            <person name="Collura K."/>
            <person name="Wissotski M."/>
            <person name="Ashley E."/>
            <person name="Morrow D."/>
            <person name="Fernandes J."/>
            <person name="Walbot V."/>
            <person name="Yu Y."/>
        </authorList>
    </citation>
    <scope>NUCLEOTIDE SEQUENCE [LARGE SCALE MRNA]</scope>
    <source>
        <strain>cv. B73</strain>
    </source>
</reference>
<reference key="4">
    <citation type="journal article" date="2011" name="Nature">
        <title>Metabolic priming by a secreted fungal effector.</title>
        <authorList>
            <person name="Djamei A."/>
            <person name="Schipper K."/>
            <person name="Rabe F."/>
            <person name="Ghosh A."/>
            <person name="Vincon V."/>
            <person name="Kahnt J."/>
            <person name="Osorio S."/>
            <person name="Tohge T."/>
            <person name="Fernie A.R."/>
            <person name="Feussner I."/>
            <person name="Feussner K."/>
            <person name="Meinicke P."/>
            <person name="Stierhof Y.D."/>
            <person name="Schwarz H."/>
            <person name="Macek B."/>
            <person name="Mann M."/>
            <person name="Kahmann R."/>
        </authorList>
    </citation>
    <scope>CATALYTIC ACTIVITY</scope>
    <scope>ACTIVITY REGULATION</scope>
    <scope>HOMODIMERIZATION</scope>
    <scope>INTERACTION WITH USTILAGO MAYDIS CMU1</scope>
    <scope>SUBCELLULAR LOCATION</scope>
</reference>
<reference key="5">
    <citation type="journal article" date="2019" name="Nature">
        <title>A kiwellin disarms the metabolic activity of a secreted fungal virulence factor.</title>
        <authorList>
            <person name="Han X."/>
            <person name="Altegoer F."/>
            <person name="Steinchen W."/>
            <person name="Binnebesel L."/>
            <person name="Schuhmacher J."/>
            <person name="Glatter T."/>
            <person name="Giammarinaro P.I."/>
            <person name="Djamei A."/>
            <person name="Rensing S.A."/>
            <person name="Reissmann S."/>
            <person name="Kahmann R."/>
            <person name="Bange G."/>
        </authorList>
    </citation>
    <scope>X-RAY CRYSTALLOGRAPHY (2.70 ANGSTROMS)</scope>
</reference>
<name>CM2_MAIZE</name>
<comment type="catalytic activity">
    <reaction evidence="2 3">
        <text>chorismate = prephenate</text>
        <dbReference type="Rhea" id="RHEA:13897"/>
        <dbReference type="ChEBI" id="CHEBI:29748"/>
        <dbReference type="ChEBI" id="CHEBI:29934"/>
        <dbReference type="EC" id="5.4.99.5"/>
    </reaction>
</comment>
<comment type="activity regulation">
    <text evidence="3">No allosteric regulation.</text>
</comment>
<comment type="pathway">
    <text evidence="1">Metabolic intermediate biosynthesis; prephenate biosynthesis; prephenate from chorismate: step 1/1.</text>
</comment>
<comment type="subunit">
    <text evidence="3">Homodimer (PubMed:21976020). Interacts with Cmu1 of the fungal pathogen Ustilago maydis (PubMed:21976020).</text>
</comment>
<comment type="subcellular location">
    <subcellularLocation>
        <location evidence="3">Cytoplasm</location>
        <location evidence="3">Cytosol</location>
    </subcellularLocation>
</comment>
<feature type="chain" id="PRO_0000446625" description="Chorismate mutase 2, cytosolic">
    <location>
        <begin position="1"/>
        <end position="253"/>
    </location>
</feature>
<feature type="domain" description="Chorismate mutase" evidence="2">
    <location>
        <begin position="2"/>
        <end position="253"/>
    </location>
</feature>
<feature type="sequence conflict" description="In Ref. 3; ACF79094." evidence="5" ref="3">
    <original>G</original>
    <variation>A</variation>
    <location>
        <position position="130"/>
    </location>
</feature>
<feature type="helix" evidence="7">
    <location>
        <begin position="11"/>
        <end position="32"/>
    </location>
</feature>
<feature type="helix" evidence="7">
    <location>
        <begin position="39"/>
        <end position="41"/>
    </location>
</feature>
<feature type="helix" evidence="7">
    <location>
        <begin position="44"/>
        <end position="46"/>
    </location>
</feature>
<feature type="strand" evidence="7">
    <location>
        <begin position="47"/>
        <end position="50"/>
    </location>
</feature>
<feature type="helix" evidence="7">
    <location>
        <begin position="53"/>
        <end position="67"/>
    </location>
</feature>
<feature type="helix" evidence="7">
    <location>
        <begin position="81"/>
        <end position="83"/>
    </location>
</feature>
<feature type="helix" evidence="7">
    <location>
        <begin position="102"/>
        <end position="104"/>
    </location>
</feature>
<feature type="helix" evidence="7">
    <location>
        <begin position="108"/>
        <end position="117"/>
    </location>
</feature>
<feature type="helix" evidence="7">
    <location>
        <begin position="120"/>
        <end position="123"/>
    </location>
</feature>
<feature type="helix" evidence="7">
    <location>
        <begin position="132"/>
        <end position="151"/>
    </location>
</feature>
<feature type="helix" evidence="7">
    <location>
        <begin position="153"/>
        <end position="163"/>
    </location>
</feature>
<feature type="helix" evidence="7">
    <location>
        <begin position="165"/>
        <end position="173"/>
    </location>
</feature>
<feature type="helix" evidence="7">
    <location>
        <begin position="177"/>
        <end position="184"/>
    </location>
</feature>
<feature type="helix" evidence="7">
    <location>
        <begin position="187"/>
        <end position="205"/>
    </location>
</feature>
<feature type="helix" evidence="7">
    <location>
        <begin position="218"/>
        <end position="220"/>
    </location>
</feature>
<feature type="helix" evidence="7">
    <location>
        <begin position="225"/>
        <end position="234"/>
    </location>
</feature>
<feature type="helix" evidence="7">
    <location>
        <begin position="236"/>
        <end position="248"/>
    </location>
</feature>
<feature type="turn" evidence="7">
    <location>
        <begin position="249"/>
        <end position="252"/>
    </location>
</feature>
<protein>
    <recommendedName>
        <fullName evidence="5">Chorismate mutase 2, cytosolic</fullName>
        <shortName evidence="4">ZmCM2</shortName>
        <ecNumber evidence="2 3">5.4.99.5</ecNumber>
    </recommendedName>
</protein>
<dbReference type="EC" id="5.4.99.5" evidence="2 3"/>
<dbReference type="EMBL" id="CM000781">
    <property type="protein sequence ID" value="AQK69073.1"/>
    <property type="molecule type" value="Genomic_DNA"/>
</dbReference>
<dbReference type="EMBL" id="EU951879">
    <property type="protein sequence ID" value="ACG23997.1"/>
    <property type="molecule type" value="mRNA"/>
</dbReference>
<dbReference type="EMBL" id="BT034089">
    <property type="protein sequence ID" value="ACF79094.1"/>
    <property type="molecule type" value="mRNA"/>
</dbReference>
<dbReference type="EMBL" id="BT040833">
    <property type="protein sequence ID" value="ACF85838.1"/>
    <property type="molecule type" value="mRNA"/>
</dbReference>
<dbReference type="RefSeq" id="NP_001130752.1">
    <property type="nucleotide sequence ID" value="NM_001137280.1"/>
</dbReference>
<dbReference type="PDB" id="6H3P">
    <property type="method" value="X-ray"/>
    <property type="resolution" value="2.70 A"/>
    <property type="chains" value="A/B=1-253"/>
</dbReference>
<dbReference type="PDBsum" id="6H3P"/>
<dbReference type="SMR" id="B4FUP5"/>
<dbReference type="FunCoup" id="B4FUP5">
    <property type="interactions" value="598"/>
</dbReference>
<dbReference type="STRING" id="4577.B4FUP5"/>
<dbReference type="PaxDb" id="4577-GRMZM2G179454_P01"/>
<dbReference type="EnsemblPlants" id="Zm00001eb234080_T001">
    <property type="protein sequence ID" value="Zm00001eb234080_P001"/>
    <property type="gene ID" value="Zm00001eb234080"/>
</dbReference>
<dbReference type="GeneID" id="100191856"/>
<dbReference type="Gramene" id="Zm00001eb234080_T001">
    <property type="protein sequence ID" value="Zm00001eb234080_P001"/>
    <property type="gene ID" value="Zm00001eb234080"/>
</dbReference>
<dbReference type="KEGG" id="zma:100191856"/>
<dbReference type="eggNOG" id="KOG0795">
    <property type="taxonomic scope" value="Eukaryota"/>
</dbReference>
<dbReference type="HOGENOM" id="CLU_057757_0_0_1"/>
<dbReference type="InParanoid" id="B4FUP5"/>
<dbReference type="OrthoDB" id="191918at2759"/>
<dbReference type="UniPathway" id="UPA00120">
    <property type="reaction ID" value="UER00203"/>
</dbReference>
<dbReference type="Proteomes" id="UP000007305">
    <property type="component" value="Chromosome 5"/>
</dbReference>
<dbReference type="ExpressionAtlas" id="B4FUP5">
    <property type="expression patterns" value="baseline and differential"/>
</dbReference>
<dbReference type="GO" id="GO:0005737">
    <property type="term" value="C:cytoplasm"/>
    <property type="evidence" value="ECO:0000318"/>
    <property type="project" value="GO_Central"/>
</dbReference>
<dbReference type="GO" id="GO:0005829">
    <property type="term" value="C:cytosol"/>
    <property type="evidence" value="ECO:0000314"/>
    <property type="project" value="UniProtKB"/>
</dbReference>
<dbReference type="GO" id="GO:0004106">
    <property type="term" value="F:chorismate mutase activity"/>
    <property type="evidence" value="ECO:0000314"/>
    <property type="project" value="UniProtKB"/>
</dbReference>
<dbReference type="GO" id="GO:0042803">
    <property type="term" value="F:protein homodimerization activity"/>
    <property type="evidence" value="ECO:0000353"/>
    <property type="project" value="UniProtKB"/>
</dbReference>
<dbReference type="GO" id="GO:0008652">
    <property type="term" value="P:amino acid biosynthetic process"/>
    <property type="evidence" value="ECO:0007669"/>
    <property type="project" value="UniProtKB-KW"/>
</dbReference>
<dbReference type="GO" id="GO:0009073">
    <property type="term" value="P:aromatic amino acid family biosynthetic process"/>
    <property type="evidence" value="ECO:0000318"/>
    <property type="project" value="GO_Central"/>
</dbReference>
<dbReference type="GO" id="GO:0046417">
    <property type="term" value="P:chorismate metabolic process"/>
    <property type="evidence" value="ECO:0000314"/>
    <property type="project" value="UniProtKB"/>
</dbReference>
<dbReference type="FunFam" id="1.10.590.10:FF:000003">
    <property type="entry name" value="Chorismate mutase"/>
    <property type="match status" value="1"/>
</dbReference>
<dbReference type="Gene3D" id="1.10.590.10">
    <property type="entry name" value="Chorismate mutase, AroQ class superfamily, eukaryotic"/>
    <property type="match status" value="1"/>
</dbReference>
<dbReference type="InterPro" id="IPR036263">
    <property type="entry name" value="Chorismate_II_sf"/>
</dbReference>
<dbReference type="InterPro" id="IPR008238">
    <property type="entry name" value="Chorismate_mutase_AroQ_euk"/>
</dbReference>
<dbReference type="InterPro" id="IPR037039">
    <property type="entry name" value="CM_AroQ_sf_eucaryotic"/>
</dbReference>
<dbReference type="InterPro" id="IPR002701">
    <property type="entry name" value="CM_II_prokaryot"/>
</dbReference>
<dbReference type="NCBIfam" id="TIGR01802">
    <property type="entry name" value="CM_pl-yst"/>
    <property type="match status" value="1"/>
</dbReference>
<dbReference type="PANTHER" id="PTHR21145">
    <property type="entry name" value="CHORISMATE MUTASE"/>
    <property type="match status" value="1"/>
</dbReference>
<dbReference type="PANTHER" id="PTHR21145:SF12">
    <property type="entry name" value="CHORISMATE MUTASE"/>
    <property type="match status" value="1"/>
</dbReference>
<dbReference type="Pfam" id="PF01817">
    <property type="entry name" value="CM_2"/>
    <property type="match status" value="1"/>
</dbReference>
<dbReference type="PIRSF" id="PIRSF017318">
    <property type="entry name" value="Chor_mut_AroQ_eu"/>
    <property type="match status" value="1"/>
</dbReference>
<dbReference type="SUPFAM" id="SSF48600">
    <property type="entry name" value="Chorismate mutase II"/>
    <property type="match status" value="1"/>
</dbReference>
<dbReference type="PROSITE" id="PS51169">
    <property type="entry name" value="CHORISMATE_MUT_3"/>
    <property type="match status" value="1"/>
</dbReference>
<sequence length="253" mass="28326">MDAAGGDQLSLAAVRDALVRLEDSVVFALIERARHPRNAPAYAPAATAGEHSLVEFFVREAEALNAKAGHYQKPEDVPFFPQDLPSPLFPTKPSPKVLHPFASLVTVNDAIWKMYFDELLPLFTVDGDDGSYAQTVALDLACLQVLSQRIHIGKYVAEVKFKDAPQEYSRLIKEKDSNSLMDMLTFKAVEEKVKKRVEKKARTFGQNVTLDDNATAGDSECKVDPKVLSKLYDQWVMPLTKDVEVEYLLRRLD</sequence>
<accession>B4FUP5</accession>
<accession>B4FAF1</accession>
<keyword id="KW-0002">3D-structure</keyword>
<keyword id="KW-0028">Amino-acid biosynthesis</keyword>
<keyword id="KW-0057">Aromatic amino acid biosynthesis</keyword>
<keyword id="KW-0963">Cytoplasm</keyword>
<keyword id="KW-0413">Isomerase</keyword>
<keyword id="KW-1185">Reference proteome</keyword>